<dbReference type="EC" id="2.1.3.2" evidence="1"/>
<dbReference type="EMBL" id="CP000362">
    <property type="protein sequence ID" value="ABG32918.1"/>
    <property type="status" value="ALT_INIT"/>
    <property type="molecule type" value="Genomic_DNA"/>
</dbReference>
<dbReference type="RefSeq" id="WP_044033201.1">
    <property type="nucleotide sequence ID" value="NC_008209.1"/>
</dbReference>
<dbReference type="SMR" id="Q163C5"/>
<dbReference type="STRING" id="375451.RD1_3427"/>
<dbReference type="KEGG" id="rde:RD1_3427"/>
<dbReference type="eggNOG" id="COG0540">
    <property type="taxonomic scope" value="Bacteria"/>
</dbReference>
<dbReference type="HOGENOM" id="CLU_043846_2_0_5"/>
<dbReference type="OrthoDB" id="9774690at2"/>
<dbReference type="UniPathway" id="UPA00070">
    <property type="reaction ID" value="UER00116"/>
</dbReference>
<dbReference type="Proteomes" id="UP000007029">
    <property type="component" value="Chromosome"/>
</dbReference>
<dbReference type="GO" id="GO:0005829">
    <property type="term" value="C:cytosol"/>
    <property type="evidence" value="ECO:0007669"/>
    <property type="project" value="TreeGrafter"/>
</dbReference>
<dbReference type="GO" id="GO:0016597">
    <property type="term" value="F:amino acid binding"/>
    <property type="evidence" value="ECO:0007669"/>
    <property type="project" value="InterPro"/>
</dbReference>
<dbReference type="GO" id="GO:0004070">
    <property type="term" value="F:aspartate carbamoyltransferase activity"/>
    <property type="evidence" value="ECO:0007669"/>
    <property type="project" value="UniProtKB-UniRule"/>
</dbReference>
<dbReference type="GO" id="GO:0006207">
    <property type="term" value="P:'de novo' pyrimidine nucleobase biosynthetic process"/>
    <property type="evidence" value="ECO:0007669"/>
    <property type="project" value="InterPro"/>
</dbReference>
<dbReference type="GO" id="GO:0044205">
    <property type="term" value="P:'de novo' UMP biosynthetic process"/>
    <property type="evidence" value="ECO:0007669"/>
    <property type="project" value="UniProtKB-UniRule"/>
</dbReference>
<dbReference type="GO" id="GO:0006520">
    <property type="term" value="P:amino acid metabolic process"/>
    <property type="evidence" value="ECO:0007669"/>
    <property type="project" value="InterPro"/>
</dbReference>
<dbReference type="FunFam" id="3.40.50.1370:FF:000007">
    <property type="entry name" value="Aspartate carbamoyltransferase"/>
    <property type="match status" value="1"/>
</dbReference>
<dbReference type="Gene3D" id="3.40.50.1370">
    <property type="entry name" value="Aspartate/ornithine carbamoyltransferase"/>
    <property type="match status" value="2"/>
</dbReference>
<dbReference type="HAMAP" id="MF_00001">
    <property type="entry name" value="Asp_carb_tr"/>
    <property type="match status" value="1"/>
</dbReference>
<dbReference type="InterPro" id="IPR006132">
    <property type="entry name" value="Asp/Orn_carbamoyltranf_P-bd"/>
</dbReference>
<dbReference type="InterPro" id="IPR006130">
    <property type="entry name" value="Asp/Orn_carbamoylTrfase"/>
</dbReference>
<dbReference type="InterPro" id="IPR036901">
    <property type="entry name" value="Asp/Orn_carbamoylTrfase_sf"/>
</dbReference>
<dbReference type="InterPro" id="IPR002082">
    <property type="entry name" value="Asp_carbamoyltransf"/>
</dbReference>
<dbReference type="InterPro" id="IPR006131">
    <property type="entry name" value="Asp_carbamoyltransf_Asp/Orn-bd"/>
</dbReference>
<dbReference type="NCBIfam" id="TIGR00670">
    <property type="entry name" value="asp_carb_tr"/>
    <property type="match status" value="1"/>
</dbReference>
<dbReference type="NCBIfam" id="NF002032">
    <property type="entry name" value="PRK00856.1"/>
    <property type="match status" value="1"/>
</dbReference>
<dbReference type="PANTHER" id="PTHR45753:SF6">
    <property type="entry name" value="ASPARTATE CARBAMOYLTRANSFERASE"/>
    <property type="match status" value="1"/>
</dbReference>
<dbReference type="PANTHER" id="PTHR45753">
    <property type="entry name" value="ORNITHINE CARBAMOYLTRANSFERASE, MITOCHONDRIAL"/>
    <property type="match status" value="1"/>
</dbReference>
<dbReference type="Pfam" id="PF00185">
    <property type="entry name" value="OTCace"/>
    <property type="match status" value="1"/>
</dbReference>
<dbReference type="Pfam" id="PF02729">
    <property type="entry name" value="OTCace_N"/>
    <property type="match status" value="1"/>
</dbReference>
<dbReference type="PRINTS" id="PR00100">
    <property type="entry name" value="AOTCASE"/>
</dbReference>
<dbReference type="PRINTS" id="PR00101">
    <property type="entry name" value="ATCASE"/>
</dbReference>
<dbReference type="SUPFAM" id="SSF53671">
    <property type="entry name" value="Aspartate/ornithine carbamoyltransferase"/>
    <property type="match status" value="1"/>
</dbReference>
<dbReference type="PROSITE" id="PS00097">
    <property type="entry name" value="CARBAMOYLTRANSFERASE"/>
    <property type="match status" value="1"/>
</dbReference>
<sequence>MTFPHRHLLGIEALRPEEINTLLDLADKYAALNRQPDKHADALKGLTQINMFFENSTRTQASFEIAGKRLGADVMNMAMQASSVKKGETLIDTALTLNAMHPDLLVVRHPQSGAVDLLAQKVNCAVLNAGDGRHEHPTQALLDALTIRRAKGRLHRLSIAICGDIAHSRVARSNIMLLGKMENRIRLIGPPTLMPSGISEFGVEVFNDMNAGLKDVDVVMMLRLQKERMDGGFIPSEREYYHRFGLDADKLSNAKPDAIIMHPGPMNRGVEIDGTLADDINRSVIQDQVEMGVAVRMAAMDLLSQNLRLTRGAE</sequence>
<keyword id="KW-0665">Pyrimidine biosynthesis</keyword>
<keyword id="KW-1185">Reference proteome</keyword>
<keyword id="KW-0808">Transferase</keyword>
<proteinExistence type="inferred from homology"/>
<comment type="function">
    <text evidence="1">Catalyzes the condensation of carbamoyl phosphate and aspartate to form carbamoyl aspartate and inorganic phosphate, the committed step in the de novo pyrimidine nucleotide biosynthesis pathway.</text>
</comment>
<comment type="catalytic activity">
    <reaction evidence="1">
        <text>carbamoyl phosphate + L-aspartate = N-carbamoyl-L-aspartate + phosphate + H(+)</text>
        <dbReference type="Rhea" id="RHEA:20013"/>
        <dbReference type="ChEBI" id="CHEBI:15378"/>
        <dbReference type="ChEBI" id="CHEBI:29991"/>
        <dbReference type="ChEBI" id="CHEBI:32814"/>
        <dbReference type="ChEBI" id="CHEBI:43474"/>
        <dbReference type="ChEBI" id="CHEBI:58228"/>
        <dbReference type="EC" id="2.1.3.2"/>
    </reaction>
</comment>
<comment type="pathway">
    <text evidence="1">Pyrimidine metabolism; UMP biosynthesis via de novo pathway; (S)-dihydroorotate from bicarbonate: step 2/3.</text>
</comment>
<comment type="subunit">
    <text evidence="1">Heterododecamer (2C3:3R2) of six catalytic PyrB chains organized as two trimers (C3), and six regulatory PyrI chains organized as three dimers (R2).</text>
</comment>
<comment type="similarity">
    <text evidence="1">Belongs to the aspartate/ornithine carbamoyltransferase superfamily. ATCase family.</text>
</comment>
<comment type="sequence caution" evidence="2">
    <conflict type="erroneous initiation">
        <sequence resource="EMBL-CDS" id="ABG32918"/>
    </conflict>
</comment>
<evidence type="ECO:0000255" key="1">
    <source>
        <dbReference type="HAMAP-Rule" id="MF_00001"/>
    </source>
</evidence>
<evidence type="ECO:0000305" key="2"/>
<feature type="chain" id="PRO_0000321153" description="Aspartate carbamoyltransferase catalytic subunit">
    <location>
        <begin position="1"/>
        <end position="314"/>
    </location>
</feature>
<feature type="binding site" evidence="1">
    <location>
        <position position="58"/>
    </location>
    <ligand>
        <name>carbamoyl phosphate</name>
        <dbReference type="ChEBI" id="CHEBI:58228"/>
    </ligand>
</feature>
<feature type="binding site" evidence="1">
    <location>
        <position position="59"/>
    </location>
    <ligand>
        <name>carbamoyl phosphate</name>
        <dbReference type="ChEBI" id="CHEBI:58228"/>
    </ligand>
</feature>
<feature type="binding site" evidence="1">
    <location>
        <position position="86"/>
    </location>
    <ligand>
        <name>L-aspartate</name>
        <dbReference type="ChEBI" id="CHEBI:29991"/>
    </ligand>
</feature>
<feature type="binding site" evidence="1">
    <location>
        <position position="108"/>
    </location>
    <ligand>
        <name>carbamoyl phosphate</name>
        <dbReference type="ChEBI" id="CHEBI:58228"/>
    </ligand>
</feature>
<feature type="binding site" evidence="1">
    <location>
        <position position="136"/>
    </location>
    <ligand>
        <name>carbamoyl phosphate</name>
        <dbReference type="ChEBI" id="CHEBI:58228"/>
    </ligand>
</feature>
<feature type="binding site" evidence="1">
    <location>
        <position position="139"/>
    </location>
    <ligand>
        <name>carbamoyl phosphate</name>
        <dbReference type="ChEBI" id="CHEBI:58228"/>
    </ligand>
</feature>
<feature type="binding site" evidence="1">
    <location>
        <position position="169"/>
    </location>
    <ligand>
        <name>L-aspartate</name>
        <dbReference type="ChEBI" id="CHEBI:29991"/>
    </ligand>
</feature>
<feature type="binding site" evidence="1">
    <location>
        <position position="223"/>
    </location>
    <ligand>
        <name>L-aspartate</name>
        <dbReference type="ChEBI" id="CHEBI:29991"/>
    </ligand>
</feature>
<feature type="binding site" evidence="1">
    <location>
        <position position="264"/>
    </location>
    <ligand>
        <name>carbamoyl phosphate</name>
        <dbReference type="ChEBI" id="CHEBI:58228"/>
    </ligand>
</feature>
<feature type="binding site" evidence="1">
    <location>
        <position position="265"/>
    </location>
    <ligand>
        <name>carbamoyl phosphate</name>
        <dbReference type="ChEBI" id="CHEBI:58228"/>
    </ligand>
</feature>
<name>PYRB_ROSDO</name>
<organism>
    <name type="scientific">Roseobacter denitrificans (strain ATCC 33942 / OCh 114)</name>
    <name type="common">Erythrobacter sp. (strain OCh 114)</name>
    <name type="synonym">Roseobacter denitrificans</name>
    <dbReference type="NCBI Taxonomy" id="375451"/>
    <lineage>
        <taxon>Bacteria</taxon>
        <taxon>Pseudomonadati</taxon>
        <taxon>Pseudomonadota</taxon>
        <taxon>Alphaproteobacteria</taxon>
        <taxon>Rhodobacterales</taxon>
        <taxon>Roseobacteraceae</taxon>
        <taxon>Roseobacter</taxon>
    </lineage>
</organism>
<gene>
    <name evidence="1" type="primary">pyrB</name>
    <name type="ordered locus">RD1_3427</name>
</gene>
<reference key="1">
    <citation type="journal article" date="2007" name="J. Bacteriol.">
        <title>The complete genome sequence of Roseobacter denitrificans reveals a mixotrophic rather than photosynthetic metabolism.</title>
        <authorList>
            <person name="Swingley W.D."/>
            <person name="Sadekar S."/>
            <person name="Mastrian S.D."/>
            <person name="Matthies H.J."/>
            <person name="Hao J."/>
            <person name="Ramos H."/>
            <person name="Acharya C.R."/>
            <person name="Conrad A.L."/>
            <person name="Taylor H.L."/>
            <person name="Dejesa L.C."/>
            <person name="Shah M.K."/>
            <person name="O'Huallachain M.E."/>
            <person name="Lince M.T."/>
            <person name="Blankenship R.E."/>
            <person name="Beatty J.T."/>
            <person name="Touchman J.W."/>
        </authorList>
    </citation>
    <scope>NUCLEOTIDE SEQUENCE [LARGE SCALE GENOMIC DNA]</scope>
    <source>
        <strain>ATCC 33942 / OCh 114</strain>
    </source>
</reference>
<accession>Q163C5</accession>
<protein>
    <recommendedName>
        <fullName evidence="1">Aspartate carbamoyltransferase catalytic subunit</fullName>
        <ecNumber evidence="1">2.1.3.2</ecNumber>
    </recommendedName>
    <alternativeName>
        <fullName evidence="1">Aspartate transcarbamylase</fullName>
        <shortName evidence="1">ATCase</shortName>
    </alternativeName>
</protein>